<accession>Q8PN74</accession>
<proteinExistence type="inferred from homology"/>
<feature type="chain" id="PRO_0000103404" description="Error-prone DNA polymerase">
    <location>
        <begin position="1"/>
        <end position="1083"/>
    </location>
</feature>
<name>DNAE2_XANAC</name>
<gene>
    <name evidence="1" type="primary">dnaE2</name>
    <name type="ordered locus">XAC1199</name>
</gene>
<keyword id="KW-0963">Cytoplasm</keyword>
<keyword id="KW-0227">DNA damage</keyword>
<keyword id="KW-0234">DNA repair</keyword>
<keyword id="KW-0235">DNA replication</keyword>
<keyword id="KW-0239">DNA-directed DNA polymerase</keyword>
<keyword id="KW-0548">Nucleotidyltransferase</keyword>
<keyword id="KW-0808">Transferase</keyword>
<protein>
    <recommendedName>
        <fullName evidence="1">Error-prone DNA polymerase</fullName>
        <ecNumber evidence="1">2.7.7.7</ecNumber>
    </recommendedName>
</protein>
<organism>
    <name type="scientific">Xanthomonas axonopodis pv. citri (strain 306)</name>
    <dbReference type="NCBI Taxonomy" id="190486"/>
    <lineage>
        <taxon>Bacteria</taxon>
        <taxon>Pseudomonadati</taxon>
        <taxon>Pseudomonadota</taxon>
        <taxon>Gammaproteobacteria</taxon>
        <taxon>Lysobacterales</taxon>
        <taxon>Lysobacteraceae</taxon>
        <taxon>Xanthomonas</taxon>
    </lineage>
</organism>
<sequence length="1083" mass="120563">MSWDDAIDGVDRDTPGGRMPRAWNVAARLRAANDDIVHAQQADGLPAYAELHCLSDFSFLRGASSAEQLFARAQQCGYSALAITDECSLAGIVRGLEASRATGVRLIVGSEFTLVDGTRFVLLVENAHGYPQLCGLITTARRAASKGAYRLDRAEVQAQFRDVAPGVFALWLPGAQPQAEQGAWLQQVFGERAFLAVELHREQDDVARLHVLQALAQQLGMTALASGDVHMAQRRERIVQDTLTAIRHTLPLAECGAHLFRNGERHLRTRRALGNIYPDALLQATVELAQRCTFDISKISYTYPRELVPEGHTPTSYLRQLTEAGIRRRWPGGITAKVREDIEKELALIALKKYEAFFLTVQDVVRFAREQNILCQGRGSSANSAVCYALGITAVNPDETRLLMARFLSEKRDEPPDIDVDFEHERREEVLQYVYSKYGRERAALAATVICYRGKSAVRDVAKAFGLPPDQIALLANCYGWGNGETPMDQRIEEAGFDLANPLINKILAVTEHLRDHPRHLSQHVGGFVISDEPLSLLVPVENAAMANRTIIQWDKDDLETMKLLKVDCLALGMLTCIRKTLDLVRGHRGRNYSIATLPGGDAPTYKMIQRADTVGVFQIESRAQMAMLPRLKPAAFYDLVIEVAIVRPGPIQGDMVHPYLRRRQGREEVNYPSPAVEDILKPTLGVPLFQEQVMELLMHAADYSEDEADNLRRSMAAWRRGGDMEQHRTRVRERMQGKGYASSFIDQIFEQIKGFGSYGFPQSHAASFAKLVYASCWLKRHEPAAFACGLLNAQPMGFYSASQIVQDARRGSPERERVEVLPVDVLHSDWDNTLVGGRPWRSAADPGEQPAIRLGMRQVAGLSQVVAQRIVAARTQRAFADIGDLCLRAALDEKARLALAEAGALQGMVGNRNAARWAMAGVEARCPLLPGSPEERPVEFEAPRAGEEILADYRSVGLSLRQHPMALLRPQMRQRRILGLRELQGRRHGSGVHVAGLVTQRQRPATAKGTIFVTLEDEQGMINVIVWSHLALRRRRALLESRLLAVRGRWERVDGVEHLIAGDLYDLSNLLGDMQLPSRDFH</sequence>
<dbReference type="EC" id="2.7.7.7" evidence="1"/>
<dbReference type="EMBL" id="AE008923">
    <property type="protein sequence ID" value="AAM36071.1"/>
    <property type="status" value="ALT_INIT"/>
    <property type="molecule type" value="Genomic_DNA"/>
</dbReference>
<dbReference type="RefSeq" id="WP_040107586.1">
    <property type="nucleotide sequence ID" value="NC_003919.1"/>
</dbReference>
<dbReference type="SMR" id="Q8PN74"/>
<dbReference type="KEGG" id="xac:XAC1199"/>
<dbReference type="eggNOG" id="COG0587">
    <property type="taxonomic scope" value="Bacteria"/>
</dbReference>
<dbReference type="HOGENOM" id="CLU_001600_4_0_6"/>
<dbReference type="Proteomes" id="UP000000576">
    <property type="component" value="Chromosome"/>
</dbReference>
<dbReference type="GO" id="GO:0005737">
    <property type="term" value="C:cytoplasm"/>
    <property type="evidence" value="ECO:0007669"/>
    <property type="project" value="UniProtKB-SubCell"/>
</dbReference>
<dbReference type="GO" id="GO:0008408">
    <property type="term" value="F:3'-5' exonuclease activity"/>
    <property type="evidence" value="ECO:0007669"/>
    <property type="project" value="InterPro"/>
</dbReference>
<dbReference type="GO" id="GO:0003887">
    <property type="term" value="F:DNA-directed DNA polymerase activity"/>
    <property type="evidence" value="ECO:0007669"/>
    <property type="project" value="UniProtKB-UniRule"/>
</dbReference>
<dbReference type="GO" id="GO:0003676">
    <property type="term" value="F:nucleic acid binding"/>
    <property type="evidence" value="ECO:0007669"/>
    <property type="project" value="InterPro"/>
</dbReference>
<dbReference type="GO" id="GO:0006281">
    <property type="term" value="P:DNA repair"/>
    <property type="evidence" value="ECO:0007669"/>
    <property type="project" value="UniProtKB-UniRule"/>
</dbReference>
<dbReference type="GO" id="GO:0006260">
    <property type="term" value="P:DNA replication"/>
    <property type="evidence" value="ECO:0007669"/>
    <property type="project" value="UniProtKB-KW"/>
</dbReference>
<dbReference type="CDD" id="cd04485">
    <property type="entry name" value="DnaE_OBF"/>
    <property type="match status" value="1"/>
</dbReference>
<dbReference type="CDD" id="cd07434">
    <property type="entry name" value="PHP_PolIIIA_DnaE2"/>
    <property type="match status" value="1"/>
</dbReference>
<dbReference type="Gene3D" id="1.10.150.870">
    <property type="match status" value="1"/>
</dbReference>
<dbReference type="Gene3D" id="3.20.20.140">
    <property type="entry name" value="Metal-dependent hydrolases"/>
    <property type="match status" value="1"/>
</dbReference>
<dbReference type="HAMAP" id="MF_01902">
    <property type="entry name" value="DNApol_error_prone"/>
    <property type="match status" value="1"/>
</dbReference>
<dbReference type="InterPro" id="IPR011708">
    <property type="entry name" value="DNA_pol3_alpha_NTPase_dom"/>
</dbReference>
<dbReference type="InterPro" id="IPR040982">
    <property type="entry name" value="DNA_pol3_finger"/>
</dbReference>
<dbReference type="InterPro" id="IPR023073">
    <property type="entry name" value="DnaE2"/>
</dbReference>
<dbReference type="InterPro" id="IPR004805">
    <property type="entry name" value="DnaE2/DnaE/PolC"/>
</dbReference>
<dbReference type="InterPro" id="IPR029460">
    <property type="entry name" value="DNAPol_HHH"/>
</dbReference>
<dbReference type="InterPro" id="IPR004365">
    <property type="entry name" value="NA-bd_OB_tRNA"/>
</dbReference>
<dbReference type="InterPro" id="IPR004013">
    <property type="entry name" value="PHP_dom"/>
</dbReference>
<dbReference type="InterPro" id="IPR003141">
    <property type="entry name" value="Pol/His_phosphatase_N"/>
</dbReference>
<dbReference type="InterPro" id="IPR016195">
    <property type="entry name" value="Pol/histidinol_Pase-like"/>
</dbReference>
<dbReference type="NCBIfam" id="TIGR00594">
    <property type="entry name" value="polc"/>
    <property type="match status" value="1"/>
</dbReference>
<dbReference type="NCBIfam" id="NF004225">
    <property type="entry name" value="PRK05672.1"/>
    <property type="match status" value="1"/>
</dbReference>
<dbReference type="PANTHER" id="PTHR32294">
    <property type="entry name" value="DNA POLYMERASE III SUBUNIT ALPHA"/>
    <property type="match status" value="1"/>
</dbReference>
<dbReference type="PANTHER" id="PTHR32294:SF4">
    <property type="entry name" value="ERROR-PRONE DNA POLYMERASE"/>
    <property type="match status" value="1"/>
</dbReference>
<dbReference type="Pfam" id="PF07733">
    <property type="entry name" value="DNA_pol3_alpha"/>
    <property type="match status" value="1"/>
</dbReference>
<dbReference type="Pfam" id="PF17657">
    <property type="entry name" value="DNA_pol3_finger"/>
    <property type="match status" value="1"/>
</dbReference>
<dbReference type="Pfam" id="PF14579">
    <property type="entry name" value="HHH_6"/>
    <property type="match status" value="1"/>
</dbReference>
<dbReference type="Pfam" id="PF02811">
    <property type="entry name" value="PHP"/>
    <property type="match status" value="1"/>
</dbReference>
<dbReference type="Pfam" id="PF01336">
    <property type="entry name" value="tRNA_anti-codon"/>
    <property type="match status" value="1"/>
</dbReference>
<dbReference type="SMART" id="SM00481">
    <property type="entry name" value="POLIIIAc"/>
    <property type="match status" value="1"/>
</dbReference>
<dbReference type="SUPFAM" id="SSF89550">
    <property type="entry name" value="PHP domain-like"/>
    <property type="match status" value="1"/>
</dbReference>
<evidence type="ECO:0000255" key="1">
    <source>
        <dbReference type="HAMAP-Rule" id="MF_01902"/>
    </source>
</evidence>
<evidence type="ECO:0000305" key="2"/>
<reference key="1">
    <citation type="journal article" date="2002" name="Nature">
        <title>Comparison of the genomes of two Xanthomonas pathogens with differing host specificities.</title>
        <authorList>
            <person name="da Silva A.C.R."/>
            <person name="Ferro J.A."/>
            <person name="Reinach F.C."/>
            <person name="Farah C.S."/>
            <person name="Furlan L.R."/>
            <person name="Quaggio R.B."/>
            <person name="Monteiro-Vitorello C.B."/>
            <person name="Van Sluys M.A."/>
            <person name="Almeida N.F. Jr."/>
            <person name="Alves L.M.C."/>
            <person name="do Amaral A.M."/>
            <person name="Bertolini M.C."/>
            <person name="Camargo L.E.A."/>
            <person name="Camarotte G."/>
            <person name="Cannavan F."/>
            <person name="Cardozo J."/>
            <person name="Chambergo F."/>
            <person name="Ciapina L.P."/>
            <person name="Cicarelli R.M.B."/>
            <person name="Coutinho L.L."/>
            <person name="Cursino-Santos J.R."/>
            <person name="El-Dorry H."/>
            <person name="Faria J.B."/>
            <person name="Ferreira A.J.S."/>
            <person name="Ferreira R.C.C."/>
            <person name="Ferro M.I.T."/>
            <person name="Formighieri E.F."/>
            <person name="Franco M.C."/>
            <person name="Greggio C.C."/>
            <person name="Gruber A."/>
            <person name="Katsuyama A.M."/>
            <person name="Kishi L.T."/>
            <person name="Leite R.P."/>
            <person name="Lemos E.G.M."/>
            <person name="Lemos M.V.F."/>
            <person name="Locali E.C."/>
            <person name="Machado M.A."/>
            <person name="Madeira A.M.B.N."/>
            <person name="Martinez-Rossi N.M."/>
            <person name="Martins E.C."/>
            <person name="Meidanis J."/>
            <person name="Menck C.F.M."/>
            <person name="Miyaki C.Y."/>
            <person name="Moon D.H."/>
            <person name="Moreira L.M."/>
            <person name="Novo M.T.M."/>
            <person name="Okura V.K."/>
            <person name="Oliveira M.C."/>
            <person name="Oliveira V.R."/>
            <person name="Pereira H.A."/>
            <person name="Rossi A."/>
            <person name="Sena J.A.D."/>
            <person name="Silva C."/>
            <person name="de Souza R.F."/>
            <person name="Spinola L.A.F."/>
            <person name="Takita M.A."/>
            <person name="Tamura R.E."/>
            <person name="Teixeira E.C."/>
            <person name="Tezza R.I.D."/>
            <person name="Trindade dos Santos M."/>
            <person name="Truffi D."/>
            <person name="Tsai S.M."/>
            <person name="White F.F."/>
            <person name="Setubal J.C."/>
            <person name="Kitajima J.P."/>
        </authorList>
    </citation>
    <scope>NUCLEOTIDE SEQUENCE [LARGE SCALE GENOMIC DNA]</scope>
    <source>
        <strain>306</strain>
    </source>
</reference>
<comment type="function">
    <text evidence="1">DNA polymerase involved in damage-induced mutagenesis and translesion synthesis (TLS). It is not the major replicative DNA polymerase.</text>
</comment>
<comment type="catalytic activity">
    <reaction evidence="1">
        <text>DNA(n) + a 2'-deoxyribonucleoside 5'-triphosphate = DNA(n+1) + diphosphate</text>
        <dbReference type="Rhea" id="RHEA:22508"/>
        <dbReference type="Rhea" id="RHEA-COMP:17339"/>
        <dbReference type="Rhea" id="RHEA-COMP:17340"/>
        <dbReference type="ChEBI" id="CHEBI:33019"/>
        <dbReference type="ChEBI" id="CHEBI:61560"/>
        <dbReference type="ChEBI" id="CHEBI:173112"/>
        <dbReference type="EC" id="2.7.7.7"/>
    </reaction>
</comment>
<comment type="subcellular location">
    <subcellularLocation>
        <location evidence="1">Cytoplasm</location>
    </subcellularLocation>
</comment>
<comment type="similarity">
    <text evidence="1">Belongs to the DNA polymerase type-C family. DnaE2 subfamily.</text>
</comment>
<comment type="sequence caution" evidence="2">
    <conflict type="erroneous initiation">
        <sequence resource="EMBL-CDS" id="AAM36071"/>
    </conflict>
</comment>